<keyword id="KW-0046">Antibiotic resistance</keyword>
<keyword id="KW-1003">Cell membrane</keyword>
<keyword id="KW-0472">Membrane</keyword>
<keyword id="KW-1185">Reference proteome</keyword>
<keyword id="KW-0812">Transmembrane</keyword>
<keyword id="KW-1133">Transmembrane helix</keyword>
<keyword id="KW-0813">Transport</keyword>
<evidence type="ECO:0000255" key="1"/>
<evidence type="ECO:0000269" key="2">
    <source>
    </source>
</evidence>
<evidence type="ECO:0000269" key="3">
    <source>
    </source>
</evidence>
<evidence type="ECO:0000305" key="4"/>
<accession>Q2FYJ5</accession>
<sequence>MEKPSREAFEGNNKLLIGIVLSVITFWLFAQSLVNVVPILEDSFNTDIGTVNIAVSITALFSGMFVVGAGGLADKYGRIKLTNIGIILNILGSLLIIISNIPLLLIIGRLIQGLSAACIMPATLSIIKSYYIGKDRQRALSYWSIGSWGGSGVCSFFGGAVATLLGWRWIFILSIIISLIALFLIKGTPETKSKSISLNKFDIKGLVLLVIMLLSLNILITKGSELGVTSLLFITLLAIAIGSFSLFIVLEKRATNPLIDFKLFKNKAYTGATASNFLLNGVAGTLIVANTFVQRGLGYSSLQAGSLSITYLVMVLIMIRVGEKLLQTLGCKKPMLIGTGVLIVGECLISLTFLPEIFYVICCIIGYLFFGLGLGIYATPSTDTAIANAPLEKVGVAAGIYKMASALGGAFGVALSGAVYAIVSNMTNIYTGAMIALWLNAGMGILSFVIILLLVPKQNDTQL</sequence>
<dbReference type="EMBL" id="CP000253">
    <property type="protein sequence ID" value="ABD30537.1"/>
    <property type="molecule type" value="Genomic_DNA"/>
</dbReference>
<dbReference type="RefSeq" id="WP_000414685.1">
    <property type="nucleotide sequence ID" value="NZ_LS483365.1"/>
</dbReference>
<dbReference type="RefSeq" id="YP_499970.1">
    <property type="nucleotide sequence ID" value="NC_007795.1"/>
</dbReference>
<dbReference type="SMR" id="Q2FYJ5"/>
<dbReference type="STRING" id="93061.SAOUHSC_01448"/>
<dbReference type="PaxDb" id="1280-SAXN108_1457"/>
<dbReference type="GeneID" id="3920226"/>
<dbReference type="KEGG" id="sao:SAOUHSC_01448"/>
<dbReference type="PATRIC" id="fig|93061.5.peg.1321"/>
<dbReference type="eggNOG" id="COG0477">
    <property type="taxonomic scope" value="Bacteria"/>
</dbReference>
<dbReference type="HOGENOM" id="CLU_000960_28_3_9"/>
<dbReference type="OrthoDB" id="2412976at2"/>
<dbReference type="PRO" id="PR:Q2FYJ5"/>
<dbReference type="Proteomes" id="UP000008816">
    <property type="component" value="Chromosome"/>
</dbReference>
<dbReference type="GO" id="GO:0005886">
    <property type="term" value="C:plasma membrane"/>
    <property type="evidence" value="ECO:0000318"/>
    <property type="project" value="GO_Central"/>
</dbReference>
<dbReference type="GO" id="GO:0022857">
    <property type="term" value="F:transmembrane transporter activity"/>
    <property type="evidence" value="ECO:0000318"/>
    <property type="project" value="GO_Central"/>
</dbReference>
<dbReference type="GO" id="GO:0046677">
    <property type="term" value="P:response to antibiotic"/>
    <property type="evidence" value="ECO:0007669"/>
    <property type="project" value="UniProtKB-KW"/>
</dbReference>
<dbReference type="GO" id="GO:0055085">
    <property type="term" value="P:transmembrane transport"/>
    <property type="evidence" value="ECO:0000318"/>
    <property type="project" value="GO_Central"/>
</dbReference>
<dbReference type="CDD" id="cd17321">
    <property type="entry name" value="MFS_MMR_MDR_like"/>
    <property type="match status" value="1"/>
</dbReference>
<dbReference type="FunFam" id="1.20.1250.20:FF:000252">
    <property type="entry name" value="Quinolone resistance protein NorB"/>
    <property type="match status" value="1"/>
</dbReference>
<dbReference type="FunFam" id="1.20.1720.10:FF:000015">
    <property type="entry name" value="Quinolone resistance protein NorB"/>
    <property type="match status" value="1"/>
</dbReference>
<dbReference type="Gene3D" id="1.20.1250.20">
    <property type="entry name" value="MFS general substrate transporter like domains"/>
    <property type="match status" value="1"/>
</dbReference>
<dbReference type="Gene3D" id="1.20.1720.10">
    <property type="entry name" value="Multidrug resistance protein D"/>
    <property type="match status" value="1"/>
</dbReference>
<dbReference type="InterPro" id="IPR011701">
    <property type="entry name" value="MFS"/>
</dbReference>
<dbReference type="InterPro" id="IPR020846">
    <property type="entry name" value="MFS_dom"/>
</dbReference>
<dbReference type="InterPro" id="IPR036259">
    <property type="entry name" value="MFS_trans_sf"/>
</dbReference>
<dbReference type="PANTHER" id="PTHR42718">
    <property type="entry name" value="MAJOR FACILITATOR SUPERFAMILY MULTIDRUG TRANSPORTER MFSC"/>
    <property type="match status" value="1"/>
</dbReference>
<dbReference type="PANTHER" id="PTHR42718:SF9">
    <property type="entry name" value="MAJOR FACILITATOR SUPERFAMILY MULTIDRUG TRANSPORTER MFSC"/>
    <property type="match status" value="1"/>
</dbReference>
<dbReference type="Pfam" id="PF07690">
    <property type="entry name" value="MFS_1"/>
    <property type="match status" value="1"/>
</dbReference>
<dbReference type="SUPFAM" id="SSF103473">
    <property type="entry name" value="MFS general substrate transporter"/>
    <property type="match status" value="1"/>
</dbReference>
<dbReference type="PROSITE" id="PS50850">
    <property type="entry name" value="MFS"/>
    <property type="match status" value="1"/>
</dbReference>
<reference key="1">
    <citation type="book" date="2006" name="Gram positive pathogens, 2nd edition">
        <title>The Staphylococcus aureus NCTC 8325 genome.</title>
        <editorList>
            <person name="Fischetti V."/>
            <person name="Novick R."/>
            <person name="Ferretti J."/>
            <person name="Portnoy D."/>
            <person name="Rood J."/>
        </editorList>
        <authorList>
            <person name="Gillaspy A.F."/>
            <person name="Worrell V."/>
            <person name="Orvis J."/>
            <person name="Roe B.A."/>
            <person name="Dyer D.W."/>
            <person name="Iandolo J.J."/>
        </authorList>
    </citation>
    <scope>NUCLEOTIDE SEQUENCE [LARGE SCALE GENOMIC DNA]</scope>
    <source>
        <strain>NCTC 8325 / PS 47</strain>
    </source>
</reference>
<reference key="2">
    <citation type="journal article" date="2005" name="J. Bacteriol.">
        <title>MgrA is a multiple regulator of two new efflux pumps in Staphylococcus aureus.</title>
        <authorList>
            <person name="Truong-Bolduc Q.C."/>
            <person name="Dunman P.M."/>
            <person name="Strahilevitz J."/>
            <person name="Projan S.J."/>
            <person name="Hooper D.C."/>
        </authorList>
    </citation>
    <scope>FUNCTION AS A MULTIDRUG RESISTANCE PUMP</scope>
    <scope>INDUCTION BY MGRA</scope>
</reference>
<reference key="3">
    <citation type="journal article" date="2007" name="J. Bacteriol.">
        <title>The transcriptional regulators norG and mgrA modulate resistance to both quinolones and beta-lactams in Staphylococcus aureus.</title>
        <authorList>
            <person name="Truong-Bolduc Q.C."/>
            <person name="Hooper D.C."/>
        </authorList>
    </citation>
    <scope>INDUCTION BY NORG</scope>
</reference>
<proteinExistence type="evidence at protein level"/>
<gene>
    <name type="primary">norB</name>
    <name type="ordered locus">SAOUHSC_01448</name>
</gene>
<comment type="function">
    <text evidence="2">Multidrug efflux pump that acts independently of NorA and is one of the factors that confers resistance against diverse quinolones and chemical compounds. Extrudes norfloxacin, ciprofloxacin, cetrimide, tetraphenylphosphonium ion (TPP), sparfloxacin, moxifloxacin and ethidium bromide. Also contributes to the efflux of tetracycline.</text>
</comment>
<comment type="subcellular location">
    <subcellularLocation>
        <location evidence="4">Cell membrane</location>
        <topology evidence="4">Multi-pass membrane protein</topology>
    </subcellularLocation>
</comment>
<comment type="induction">
    <text evidence="2 3">Down-regulated by MgrA. Up-regulated by NorG.</text>
</comment>
<comment type="similarity">
    <text evidence="4">Belongs to the major facilitator superfamily. TCR/Tet family.</text>
</comment>
<organism>
    <name type="scientific">Staphylococcus aureus (strain NCTC 8325 / PS 47)</name>
    <dbReference type="NCBI Taxonomy" id="93061"/>
    <lineage>
        <taxon>Bacteria</taxon>
        <taxon>Bacillati</taxon>
        <taxon>Bacillota</taxon>
        <taxon>Bacilli</taxon>
        <taxon>Bacillales</taxon>
        <taxon>Staphylococcaceae</taxon>
        <taxon>Staphylococcus</taxon>
    </lineage>
</organism>
<feature type="chain" id="PRO_0000361964" description="Quinolone resistance protein NorB">
    <location>
        <begin position="1"/>
        <end position="463"/>
    </location>
</feature>
<feature type="transmembrane region" description="Helical" evidence="1">
    <location>
        <begin position="17"/>
        <end position="37"/>
    </location>
</feature>
<feature type="transmembrane region" description="Helical" evidence="1">
    <location>
        <begin position="53"/>
        <end position="73"/>
    </location>
</feature>
<feature type="transmembrane region" description="Helical" evidence="1">
    <location>
        <begin position="86"/>
        <end position="106"/>
    </location>
</feature>
<feature type="transmembrane region" description="Helical" evidence="1">
    <location>
        <begin position="107"/>
        <end position="127"/>
    </location>
</feature>
<feature type="transmembrane region" description="Helical" evidence="1">
    <location>
        <begin position="142"/>
        <end position="162"/>
    </location>
</feature>
<feature type="transmembrane region" description="Helical" evidence="1">
    <location>
        <begin position="165"/>
        <end position="185"/>
    </location>
</feature>
<feature type="transmembrane region" description="Helical" evidence="1">
    <location>
        <begin position="201"/>
        <end position="221"/>
    </location>
</feature>
<feature type="transmembrane region" description="Helical" evidence="1">
    <location>
        <begin position="230"/>
        <end position="250"/>
    </location>
</feature>
<feature type="transmembrane region" description="Helical" evidence="1">
    <location>
        <begin position="273"/>
        <end position="293"/>
    </location>
</feature>
<feature type="transmembrane region" description="Helical" evidence="1">
    <location>
        <begin position="299"/>
        <end position="319"/>
    </location>
</feature>
<feature type="transmembrane region" description="Helical" evidence="1">
    <location>
        <begin position="334"/>
        <end position="354"/>
    </location>
</feature>
<feature type="transmembrane region" description="Helical" evidence="1">
    <location>
        <begin position="357"/>
        <end position="377"/>
    </location>
</feature>
<feature type="transmembrane region" description="Helical" evidence="1">
    <location>
        <begin position="403"/>
        <end position="423"/>
    </location>
</feature>
<feature type="transmembrane region" description="Helical" evidence="1">
    <location>
        <begin position="435"/>
        <end position="455"/>
    </location>
</feature>
<protein>
    <recommendedName>
        <fullName>Quinolone resistance protein NorB</fullName>
    </recommendedName>
</protein>
<name>NORB_STAA8</name>